<sequence length="38" mass="4364">MKVRASVKKLCRNCKIVKRDGVIRVICSAEPKHKQRQG</sequence>
<gene>
    <name type="primary">rpmJ</name>
    <name type="ordered locus">STM3419</name>
</gene>
<organism>
    <name type="scientific">Salmonella typhimurium (strain LT2 / SGSC1412 / ATCC 700720)</name>
    <dbReference type="NCBI Taxonomy" id="99287"/>
    <lineage>
        <taxon>Bacteria</taxon>
        <taxon>Pseudomonadati</taxon>
        <taxon>Pseudomonadota</taxon>
        <taxon>Gammaproteobacteria</taxon>
        <taxon>Enterobacterales</taxon>
        <taxon>Enterobacteriaceae</taxon>
        <taxon>Salmonella</taxon>
    </lineage>
</organism>
<proteinExistence type="inferred from homology"/>
<protein>
    <recommendedName>
        <fullName evidence="1">Large ribosomal subunit protein bL36A</fullName>
    </recommendedName>
    <alternativeName>
        <fullName evidence="2">50S ribosomal protein L36 1</fullName>
    </alternativeName>
</protein>
<keyword id="KW-1185">Reference proteome</keyword>
<keyword id="KW-0687">Ribonucleoprotein</keyword>
<keyword id="KW-0689">Ribosomal protein</keyword>
<feature type="chain" id="PRO_0000126253" description="Large ribosomal subunit protein bL36A">
    <location>
        <begin position="1"/>
        <end position="38"/>
    </location>
</feature>
<dbReference type="EMBL" id="AE006468">
    <property type="protein sequence ID" value="AAL22282.1"/>
    <property type="molecule type" value="Genomic_DNA"/>
</dbReference>
<dbReference type="RefSeq" id="NP_462323.1">
    <property type="nucleotide sequence ID" value="NC_003197.2"/>
</dbReference>
<dbReference type="RefSeq" id="WP_000868187.1">
    <property type="nucleotide sequence ID" value="NC_003197.2"/>
</dbReference>
<dbReference type="SMR" id="P0A7Q8"/>
<dbReference type="STRING" id="99287.STM3419"/>
<dbReference type="PaxDb" id="99287-STM3419"/>
<dbReference type="GeneID" id="1254942"/>
<dbReference type="GeneID" id="98390421"/>
<dbReference type="KEGG" id="stm:STM3419"/>
<dbReference type="HOGENOM" id="CLU_135723_6_2_6"/>
<dbReference type="PhylomeDB" id="P0A7Q8"/>
<dbReference type="BioCyc" id="SENT99287:STM3419-MONOMER"/>
<dbReference type="PRO" id="PR:P0A7Q8"/>
<dbReference type="Proteomes" id="UP000001014">
    <property type="component" value="Chromosome"/>
</dbReference>
<dbReference type="GO" id="GO:0005737">
    <property type="term" value="C:cytoplasm"/>
    <property type="evidence" value="ECO:0007669"/>
    <property type="project" value="UniProtKB-ARBA"/>
</dbReference>
<dbReference type="GO" id="GO:1990904">
    <property type="term" value="C:ribonucleoprotein complex"/>
    <property type="evidence" value="ECO:0007669"/>
    <property type="project" value="UniProtKB-KW"/>
</dbReference>
<dbReference type="GO" id="GO:0005840">
    <property type="term" value="C:ribosome"/>
    <property type="evidence" value="ECO:0007669"/>
    <property type="project" value="UniProtKB-KW"/>
</dbReference>
<dbReference type="GO" id="GO:0003735">
    <property type="term" value="F:structural constituent of ribosome"/>
    <property type="evidence" value="ECO:0007669"/>
    <property type="project" value="InterPro"/>
</dbReference>
<dbReference type="GO" id="GO:0006412">
    <property type="term" value="P:translation"/>
    <property type="evidence" value="ECO:0007669"/>
    <property type="project" value="UniProtKB-UniRule"/>
</dbReference>
<dbReference type="HAMAP" id="MF_00251">
    <property type="entry name" value="Ribosomal_bL36"/>
    <property type="match status" value="1"/>
</dbReference>
<dbReference type="InterPro" id="IPR000473">
    <property type="entry name" value="Ribosomal_bL36"/>
</dbReference>
<dbReference type="InterPro" id="IPR035977">
    <property type="entry name" value="Ribosomal_bL36_sp"/>
</dbReference>
<dbReference type="NCBIfam" id="TIGR01022">
    <property type="entry name" value="rpmJ_bact"/>
    <property type="match status" value="1"/>
</dbReference>
<dbReference type="PANTHER" id="PTHR42888">
    <property type="entry name" value="50S RIBOSOMAL PROTEIN L36, CHLOROPLASTIC"/>
    <property type="match status" value="1"/>
</dbReference>
<dbReference type="PANTHER" id="PTHR42888:SF1">
    <property type="entry name" value="LARGE RIBOSOMAL SUBUNIT PROTEIN BL36C"/>
    <property type="match status" value="1"/>
</dbReference>
<dbReference type="Pfam" id="PF00444">
    <property type="entry name" value="Ribosomal_L36"/>
    <property type="match status" value="1"/>
</dbReference>
<dbReference type="SUPFAM" id="SSF57840">
    <property type="entry name" value="Ribosomal protein L36"/>
    <property type="match status" value="1"/>
</dbReference>
<dbReference type="PROSITE" id="PS00828">
    <property type="entry name" value="RIBOSOMAL_L36"/>
    <property type="match status" value="1"/>
</dbReference>
<evidence type="ECO:0000255" key="1">
    <source>
        <dbReference type="HAMAP-Rule" id="MF_00251"/>
    </source>
</evidence>
<evidence type="ECO:0000305" key="2"/>
<comment type="similarity">
    <text evidence="2">Belongs to the bacterial ribosomal protein bL36 family.</text>
</comment>
<reference key="1">
    <citation type="journal article" date="2001" name="Nature">
        <title>Complete genome sequence of Salmonella enterica serovar Typhimurium LT2.</title>
        <authorList>
            <person name="McClelland M."/>
            <person name="Sanderson K.E."/>
            <person name="Spieth J."/>
            <person name="Clifton S.W."/>
            <person name="Latreille P."/>
            <person name="Courtney L."/>
            <person name="Porwollik S."/>
            <person name="Ali J."/>
            <person name="Dante M."/>
            <person name="Du F."/>
            <person name="Hou S."/>
            <person name="Layman D."/>
            <person name="Leonard S."/>
            <person name="Nguyen C."/>
            <person name="Scott K."/>
            <person name="Holmes A."/>
            <person name="Grewal N."/>
            <person name="Mulvaney E."/>
            <person name="Ryan E."/>
            <person name="Sun H."/>
            <person name="Florea L."/>
            <person name="Miller W."/>
            <person name="Stoneking T."/>
            <person name="Nhan M."/>
            <person name="Waterston R."/>
            <person name="Wilson R.K."/>
        </authorList>
    </citation>
    <scope>NUCLEOTIDE SEQUENCE [LARGE SCALE GENOMIC DNA]</scope>
    <source>
        <strain>LT2 / SGSC1412 / ATCC 700720</strain>
    </source>
</reference>
<name>RL361_SALTY</name>
<accession>P0A7Q8</accession>
<accession>P21194</accession>